<sequence length="82" mass="8523">MSASKILVGCWLGLAVLSVSTVLLGNAGATLALAAGVLLAAFGKAWLITDGFMELRHAPPAWRLLLLGWPLLMAIGVLLTLL</sequence>
<keyword id="KW-1003">Cell membrane</keyword>
<keyword id="KW-0472">Membrane</keyword>
<keyword id="KW-0812">Transmembrane</keyword>
<keyword id="KW-1133">Transmembrane helix</keyword>
<comment type="subcellular location">
    <subcellularLocation>
        <location>Cell membrane</location>
        <topology>Multi-pass membrane protein</topology>
    </subcellularLocation>
</comment>
<reference key="1">
    <citation type="journal article" date="1996" name="Biochim. Biophys. Acta">
        <title>Sequence analysis of an internal 9.72-kb segment from the 30-kb denitrification gene cluster of Pseudomonas stutzeri.</title>
        <authorList>
            <person name="Glockner A.B."/>
            <person name="Zumft W.G."/>
        </authorList>
    </citation>
    <scope>NUCLEOTIDE SEQUENCE [GENOMIC DNA]</scope>
    <source>
        <strain>ATCC 14405 / JCM 20778 / CIP 107696 / IAM 12931 / LMG 2243 / NCIMB 568 / Baumann 218 / ZoBell 632</strain>
    </source>
</reference>
<evidence type="ECO:0000255" key="1"/>
<accession>P95549</accession>
<proteinExistence type="predicted"/>
<organism>
    <name type="scientific">Stutzerimonas stutzeri</name>
    <name type="common">Pseudomonas stutzeri</name>
    <dbReference type="NCBI Taxonomy" id="316"/>
    <lineage>
        <taxon>Bacteria</taxon>
        <taxon>Pseudomonadati</taxon>
        <taxon>Pseudomonadota</taxon>
        <taxon>Gammaproteobacteria</taxon>
        <taxon>Pseudomonadales</taxon>
        <taxon>Pseudomonadaceae</taxon>
        <taxon>Stutzerimonas</taxon>
    </lineage>
</organism>
<feature type="chain" id="PRO_0000066340" description="Uncharacterized 8.5 kDa protein in nirQ 3'region">
    <location>
        <begin position="1"/>
        <end position="82"/>
    </location>
</feature>
<feature type="transmembrane region" description="Helical" evidence="1">
    <location>
        <begin position="1"/>
        <end position="21"/>
    </location>
</feature>
<feature type="transmembrane region" description="Helical" evidence="1">
    <location>
        <begin position="22"/>
        <end position="42"/>
    </location>
</feature>
<feature type="transmembrane region" description="Helical" evidence="1">
    <location>
        <begin position="62"/>
        <end position="82"/>
    </location>
</feature>
<protein>
    <recommendedName>
        <fullName>Uncharacterized 8.5 kDa protein in nirQ 3'region</fullName>
    </recommendedName>
    <alternativeName>
        <fullName>ORF82</fullName>
    </alternativeName>
</protein>
<name>YNQ3_STUST</name>
<dbReference type="EMBL" id="X53676">
    <property type="protein sequence ID" value="CAA98150.1"/>
    <property type="molecule type" value="Genomic_DNA"/>
</dbReference>
<dbReference type="RefSeq" id="WP_003279949.1">
    <property type="nucleotide sequence ID" value="NZ_CP036186.1"/>
</dbReference>
<dbReference type="GO" id="GO:0005886">
    <property type="term" value="C:plasma membrane"/>
    <property type="evidence" value="ECO:0007669"/>
    <property type="project" value="UniProtKB-SubCell"/>
</dbReference>
<dbReference type="InterPro" id="IPR005171">
    <property type="entry name" value="Cyt_c_oxidase_su4_prok"/>
</dbReference>
<dbReference type="Pfam" id="PF03626">
    <property type="entry name" value="COX4_pro"/>
    <property type="match status" value="1"/>
</dbReference>